<proteinExistence type="inferred from homology"/>
<name>NUOI_RICAE</name>
<reference key="1">
    <citation type="journal article" date="2009" name="BMC Genomics">
        <title>Analysis of the Rickettsia africae genome reveals that virulence acquisition in Rickettsia species may be explained by genome reduction.</title>
        <authorList>
            <person name="Fournier P.-E."/>
            <person name="El Karkouri K."/>
            <person name="Leroy Q."/>
            <person name="Robert C."/>
            <person name="Giumelli B."/>
            <person name="Renesto P."/>
            <person name="Socolovschi C."/>
            <person name="Parola P."/>
            <person name="Audic S."/>
            <person name="Raoult D."/>
        </authorList>
    </citation>
    <scope>NUCLEOTIDE SEQUENCE [LARGE SCALE GENOMIC DNA]</scope>
    <source>
        <strain>ESF-5</strain>
    </source>
</reference>
<dbReference type="EC" id="7.1.1.-" evidence="1"/>
<dbReference type="EMBL" id="CP001612">
    <property type="protein sequence ID" value="ACP53915.1"/>
    <property type="molecule type" value="Genomic_DNA"/>
</dbReference>
<dbReference type="RefSeq" id="WP_012720043.1">
    <property type="nucleotide sequence ID" value="NC_012633.1"/>
</dbReference>
<dbReference type="SMR" id="C3PLS5"/>
<dbReference type="KEGG" id="raf:RAF_ORF1120"/>
<dbReference type="HOGENOM" id="CLU_067218_5_1_5"/>
<dbReference type="Proteomes" id="UP000002305">
    <property type="component" value="Chromosome"/>
</dbReference>
<dbReference type="GO" id="GO:0005886">
    <property type="term" value="C:plasma membrane"/>
    <property type="evidence" value="ECO:0007669"/>
    <property type="project" value="UniProtKB-SubCell"/>
</dbReference>
<dbReference type="GO" id="GO:0051539">
    <property type="term" value="F:4 iron, 4 sulfur cluster binding"/>
    <property type="evidence" value="ECO:0007669"/>
    <property type="project" value="UniProtKB-KW"/>
</dbReference>
<dbReference type="GO" id="GO:0005506">
    <property type="term" value="F:iron ion binding"/>
    <property type="evidence" value="ECO:0007669"/>
    <property type="project" value="UniProtKB-UniRule"/>
</dbReference>
<dbReference type="GO" id="GO:0050136">
    <property type="term" value="F:NADH:ubiquinone reductase (non-electrogenic) activity"/>
    <property type="evidence" value="ECO:0007669"/>
    <property type="project" value="UniProtKB-UniRule"/>
</dbReference>
<dbReference type="GO" id="GO:0048038">
    <property type="term" value="F:quinone binding"/>
    <property type="evidence" value="ECO:0007669"/>
    <property type="project" value="UniProtKB-KW"/>
</dbReference>
<dbReference type="GO" id="GO:0009060">
    <property type="term" value="P:aerobic respiration"/>
    <property type="evidence" value="ECO:0007669"/>
    <property type="project" value="TreeGrafter"/>
</dbReference>
<dbReference type="FunFam" id="3.30.70.3270:FF:000001">
    <property type="entry name" value="NADH-quinone oxidoreductase subunit I 1"/>
    <property type="match status" value="1"/>
</dbReference>
<dbReference type="Gene3D" id="3.30.70.3270">
    <property type="match status" value="1"/>
</dbReference>
<dbReference type="HAMAP" id="MF_01351">
    <property type="entry name" value="NDH1_NuoI"/>
    <property type="match status" value="1"/>
</dbReference>
<dbReference type="InterPro" id="IPR017896">
    <property type="entry name" value="4Fe4S_Fe-S-bd"/>
</dbReference>
<dbReference type="InterPro" id="IPR017900">
    <property type="entry name" value="4Fe4S_Fe_S_CS"/>
</dbReference>
<dbReference type="InterPro" id="IPR010226">
    <property type="entry name" value="NADH_quinone_OxRdtase_chainI"/>
</dbReference>
<dbReference type="NCBIfam" id="TIGR01971">
    <property type="entry name" value="NuoI"/>
    <property type="match status" value="1"/>
</dbReference>
<dbReference type="NCBIfam" id="NF004538">
    <property type="entry name" value="PRK05888.1-4"/>
    <property type="match status" value="1"/>
</dbReference>
<dbReference type="NCBIfam" id="NF004539">
    <property type="entry name" value="PRK05888.1-5"/>
    <property type="match status" value="1"/>
</dbReference>
<dbReference type="PANTHER" id="PTHR10849:SF20">
    <property type="entry name" value="NADH DEHYDROGENASE [UBIQUINONE] IRON-SULFUR PROTEIN 8, MITOCHONDRIAL"/>
    <property type="match status" value="1"/>
</dbReference>
<dbReference type="PANTHER" id="PTHR10849">
    <property type="entry name" value="NADH DEHYDROGENASE UBIQUINONE IRON-SULFUR PROTEIN 8, MITOCHONDRIAL"/>
    <property type="match status" value="1"/>
</dbReference>
<dbReference type="Pfam" id="PF12838">
    <property type="entry name" value="Fer4_7"/>
    <property type="match status" value="1"/>
</dbReference>
<dbReference type="SUPFAM" id="SSF54862">
    <property type="entry name" value="4Fe-4S ferredoxins"/>
    <property type="match status" value="1"/>
</dbReference>
<dbReference type="PROSITE" id="PS00198">
    <property type="entry name" value="4FE4S_FER_1"/>
    <property type="match status" value="2"/>
</dbReference>
<dbReference type="PROSITE" id="PS51379">
    <property type="entry name" value="4FE4S_FER_2"/>
    <property type="match status" value="2"/>
</dbReference>
<protein>
    <recommendedName>
        <fullName evidence="1">NADH-quinone oxidoreductase subunit I</fullName>
        <ecNumber evidence="1">7.1.1.-</ecNumber>
    </recommendedName>
    <alternativeName>
        <fullName evidence="1">NADH dehydrogenase I subunit I</fullName>
    </alternativeName>
    <alternativeName>
        <fullName evidence="1">NDH-1 subunit I</fullName>
    </alternativeName>
</protein>
<organism>
    <name type="scientific">Rickettsia africae (strain ESF-5)</name>
    <dbReference type="NCBI Taxonomy" id="347255"/>
    <lineage>
        <taxon>Bacteria</taxon>
        <taxon>Pseudomonadati</taxon>
        <taxon>Pseudomonadota</taxon>
        <taxon>Alphaproteobacteria</taxon>
        <taxon>Rickettsiales</taxon>
        <taxon>Rickettsiaceae</taxon>
        <taxon>Rickettsieae</taxon>
        <taxon>Rickettsia</taxon>
        <taxon>spotted fever group</taxon>
    </lineage>
</organism>
<sequence length="159" mass="18613">MIHYLKSFFLYEIVRGMALTLKYFFKPKVTINYPYEKSPISPRFKGEHALRRYENGEERCIACKLCEAICPAQAIVIEADEREDGSRRTTRYDIDMTKCIYCGLCQEACPVDAIVEGPNFEFASLTHTALIYDKERLLQNGDRWEQALASKLRKDYEYR</sequence>
<keyword id="KW-0004">4Fe-4S</keyword>
<keyword id="KW-1003">Cell membrane</keyword>
<keyword id="KW-0408">Iron</keyword>
<keyword id="KW-0411">Iron-sulfur</keyword>
<keyword id="KW-0472">Membrane</keyword>
<keyword id="KW-0479">Metal-binding</keyword>
<keyword id="KW-0520">NAD</keyword>
<keyword id="KW-0874">Quinone</keyword>
<keyword id="KW-0677">Repeat</keyword>
<keyword id="KW-1278">Translocase</keyword>
<keyword id="KW-0830">Ubiquinone</keyword>
<comment type="function">
    <text evidence="1">NDH-1 shuttles electrons from NADH, via FMN and iron-sulfur (Fe-S) centers, to quinones in the respiratory chain. The immediate electron acceptor for the enzyme in this species is believed to be ubiquinone. Couples the redox reaction to proton translocation (for every two electrons transferred, four hydrogen ions are translocated across the cytoplasmic membrane), and thus conserves the redox energy in a proton gradient.</text>
</comment>
<comment type="catalytic activity">
    <reaction evidence="1">
        <text>a quinone + NADH + 5 H(+)(in) = a quinol + NAD(+) + 4 H(+)(out)</text>
        <dbReference type="Rhea" id="RHEA:57888"/>
        <dbReference type="ChEBI" id="CHEBI:15378"/>
        <dbReference type="ChEBI" id="CHEBI:24646"/>
        <dbReference type="ChEBI" id="CHEBI:57540"/>
        <dbReference type="ChEBI" id="CHEBI:57945"/>
        <dbReference type="ChEBI" id="CHEBI:132124"/>
    </reaction>
</comment>
<comment type="cofactor">
    <cofactor evidence="1">
        <name>[4Fe-4S] cluster</name>
        <dbReference type="ChEBI" id="CHEBI:49883"/>
    </cofactor>
    <text evidence="1">Binds 2 [4Fe-4S] clusters per subunit.</text>
</comment>
<comment type="subunit">
    <text evidence="1">NDH-1 is composed of 14 different subunits. Subunits NuoA, H, J, K, L, M, N constitute the membrane sector of the complex.</text>
</comment>
<comment type="subcellular location">
    <subcellularLocation>
        <location evidence="1">Cell membrane</location>
        <topology evidence="1">Peripheral membrane protein</topology>
    </subcellularLocation>
</comment>
<comment type="similarity">
    <text evidence="1">Belongs to the complex I 23 kDa subunit family.</text>
</comment>
<evidence type="ECO:0000255" key="1">
    <source>
        <dbReference type="HAMAP-Rule" id="MF_01351"/>
    </source>
</evidence>
<accession>C3PLS5</accession>
<feature type="chain" id="PRO_1000214851" description="NADH-quinone oxidoreductase subunit I">
    <location>
        <begin position="1"/>
        <end position="159"/>
    </location>
</feature>
<feature type="domain" description="4Fe-4S ferredoxin-type 1" evidence="1">
    <location>
        <begin position="51"/>
        <end position="80"/>
    </location>
</feature>
<feature type="domain" description="4Fe-4S ferredoxin-type 2" evidence="1">
    <location>
        <begin position="90"/>
        <end position="119"/>
    </location>
</feature>
<feature type="binding site" evidence="1">
    <location>
        <position position="60"/>
    </location>
    <ligand>
        <name>[4Fe-4S] cluster</name>
        <dbReference type="ChEBI" id="CHEBI:49883"/>
        <label>1</label>
    </ligand>
</feature>
<feature type="binding site" evidence="1">
    <location>
        <position position="63"/>
    </location>
    <ligand>
        <name>[4Fe-4S] cluster</name>
        <dbReference type="ChEBI" id="CHEBI:49883"/>
        <label>1</label>
    </ligand>
</feature>
<feature type="binding site" evidence="1">
    <location>
        <position position="66"/>
    </location>
    <ligand>
        <name>[4Fe-4S] cluster</name>
        <dbReference type="ChEBI" id="CHEBI:49883"/>
        <label>1</label>
    </ligand>
</feature>
<feature type="binding site" evidence="1">
    <location>
        <position position="70"/>
    </location>
    <ligand>
        <name>[4Fe-4S] cluster</name>
        <dbReference type="ChEBI" id="CHEBI:49883"/>
        <label>2</label>
    </ligand>
</feature>
<feature type="binding site" evidence="1">
    <location>
        <position position="99"/>
    </location>
    <ligand>
        <name>[4Fe-4S] cluster</name>
        <dbReference type="ChEBI" id="CHEBI:49883"/>
        <label>2</label>
    </ligand>
</feature>
<feature type="binding site" evidence="1">
    <location>
        <position position="102"/>
    </location>
    <ligand>
        <name>[4Fe-4S] cluster</name>
        <dbReference type="ChEBI" id="CHEBI:49883"/>
        <label>2</label>
    </ligand>
</feature>
<feature type="binding site" evidence="1">
    <location>
        <position position="105"/>
    </location>
    <ligand>
        <name>[4Fe-4S] cluster</name>
        <dbReference type="ChEBI" id="CHEBI:49883"/>
        <label>2</label>
    </ligand>
</feature>
<feature type="binding site" evidence="1">
    <location>
        <position position="109"/>
    </location>
    <ligand>
        <name>[4Fe-4S] cluster</name>
        <dbReference type="ChEBI" id="CHEBI:49883"/>
        <label>1</label>
    </ligand>
</feature>
<gene>
    <name evidence="1" type="primary">nuoI</name>
    <name type="ordered locus">RAF_ORF1120</name>
</gene>